<name>PDXJ_PARMW</name>
<comment type="function">
    <text evidence="1">Catalyzes the complicated ring closure reaction between the two acyclic compounds 1-deoxy-D-xylulose-5-phosphate (DXP) and 3-amino-2-oxopropyl phosphate (1-amino-acetone-3-phosphate or AAP) to form pyridoxine 5'-phosphate (PNP) and inorganic phosphate.</text>
</comment>
<comment type="catalytic activity">
    <reaction evidence="1">
        <text>3-amino-2-oxopropyl phosphate + 1-deoxy-D-xylulose 5-phosphate = pyridoxine 5'-phosphate + phosphate + 2 H2O + H(+)</text>
        <dbReference type="Rhea" id="RHEA:15265"/>
        <dbReference type="ChEBI" id="CHEBI:15377"/>
        <dbReference type="ChEBI" id="CHEBI:15378"/>
        <dbReference type="ChEBI" id="CHEBI:43474"/>
        <dbReference type="ChEBI" id="CHEBI:57279"/>
        <dbReference type="ChEBI" id="CHEBI:57792"/>
        <dbReference type="ChEBI" id="CHEBI:58589"/>
        <dbReference type="EC" id="2.6.99.2"/>
    </reaction>
</comment>
<comment type="pathway">
    <text evidence="1">Cofactor biosynthesis; pyridoxine 5'-phosphate biosynthesis; pyridoxine 5'-phosphate from D-erythrose 4-phosphate: step 5/5.</text>
</comment>
<comment type="subunit">
    <text evidence="1">Homooctamer; tetramer of dimers.</text>
</comment>
<comment type="subcellular location">
    <subcellularLocation>
        <location evidence="1">Cytoplasm</location>
    </subcellularLocation>
</comment>
<comment type="similarity">
    <text evidence="1">Belongs to the PNP synthase family.</text>
</comment>
<evidence type="ECO:0000255" key="1">
    <source>
        <dbReference type="HAMAP-Rule" id="MF_00279"/>
    </source>
</evidence>
<dbReference type="EC" id="2.6.99.2" evidence="1"/>
<dbReference type="EMBL" id="BX569691">
    <property type="protein sequence ID" value="CAE07425.1"/>
    <property type="molecule type" value="Genomic_DNA"/>
</dbReference>
<dbReference type="RefSeq" id="WP_011127775.1">
    <property type="nucleotide sequence ID" value="NC_005070.1"/>
</dbReference>
<dbReference type="SMR" id="Q7U7S1"/>
<dbReference type="STRING" id="84588.SYNW0910"/>
<dbReference type="KEGG" id="syw:SYNW0910"/>
<dbReference type="eggNOG" id="COG0854">
    <property type="taxonomic scope" value="Bacteria"/>
</dbReference>
<dbReference type="HOGENOM" id="CLU_074563_0_0_3"/>
<dbReference type="UniPathway" id="UPA00244">
    <property type="reaction ID" value="UER00313"/>
</dbReference>
<dbReference type="Proteomes" id="UP000001422">
    <property type="component" value="Chromosome"/>
</dbReference>
<dbReference type="GO" id="GO:0005829">
    <property type="term" value="C:cytosol"/>
    <property type="evidence" value="ECO:0007669"/>
    <property type="project" value="TreeGrafter"/>
</dbReference>
<dbReference type="GO" id="GO:0033856">
    <property type="term" value="F:pyridoxine 5'-phosphate synthase activity"/>
    <property type="evidence" value="ECO:0007669"/>
    <property type="project" value="UniProtKB-EC"/>
</dbReference>
<dbReference type="GO" id="GO:0008615">
    <property type="term" value="P:pyridoxine biosynthetic process"/>
    <property type="evidence" value="ECO:0007669"/>
    <property type="project" value="UniProtKB-UniRule"/>
</dbReference>
<dbReference type="CDD" id="cd00003">
    <property type="entry name" value="PNPsynthase"/>
    <property type="match status" value="1"/>
</dbReference>
<dbReference type="Gene3D" id="3.20.20.70">
    <property type="entry name" value="Aldolase class I"/>
    <property type="match status" value="1"/>
</dbReference>
<dbReference type="HAMAP" id="MF_00279">
    <property type="entry name" value="PdxJ"/>
    <property type="match status" value="1"/>
</dbReference>
<dbReference type="InterPro" id="IPR013785">
    <property type="entry name" value="Aldolase_TIM"/>
</dbReference>
<dbReference type="InterPro" id="IPR004569">
    <property type="entry name" value="PyrdxlP_synth_PdxJ"/>
</dbReference>
<dbReference type="InterPro" id="IPR036130">
    <property type="entry name" value="Pyridoxine-5'_phos_synth"/>
</dbReference>
<dbReference type="NCBIfam" id="TIGR00559">
    <property type="entry name" value="pdxJ"/>
    <property type="match status" value="1"/>
</dbReference>
<dbReference type="NCBIfam" id="NF003623">
    <property type="entry name" value="PRK05265.1-1"/>
    <property type="match status" value="1"/>
</dbReference>
<dbReference type="NCBIfam" id="NF003625">
    <property type="entry name" value="PRK05265.1-3"/>
    <property type="match status" value="1"/>
</dbReference>
<dbReference type="NCBIfam" id="NF003627">
    <property type="entry name" value="PRK05265.1-5"/>
    <property type="match status" value="1"/>
</dbReference>
<dbReference type="PANTHER" id="PTHR30456">
    <property type="entry name" value="PYRIDOXINE 5'-PHOSPHATE SYNTHASE"/>
    <property type="match status" value="1"/>
</dbReference>
<dbReference type="PANTHER" id="PTHR30456:SF0">
    <property type="entry name" value="PYRIDOXINE 5'-PHOSPHATE SYNTHASE"/>
    <property type="match status" value="1"/>
</dbReference>
<dbReference type="Pfam" id="PF03740">
    <property type="entry name" value="PdxJ"/>
    <property type="match status" value="1"/>
</dbReference>
<dbReference type="SUPFAM" id="SSF63892">
    <property type="entry name" value="Pyridoxine 5'-phosphate synthase"/>
    <property type="match status" value="1"/>
</dbReference>
<gene>
    <name evidence="1" type="primary">pdxJ</name>
    <name type="ordered locus">SYNW0910</name>
</gene>
<keyword id="KW-0963">Cytoplasm</keyword>
<keyword id="KW-0664">Pyridoxine biosynthesis</keyword>
<keyword id="KW-0808">Transferase</keyword>
<protein>
    <recommendedName>
        <fullName evidence="1">Pyridoxine 5'-phosphate synthase</fullName>
        <shortName evidence="1">PNP synthase</shortName>
        <ecNumber evidence="1">2.6.99.2</ecNumber>
    </recommendedName>
</protein>
<proteinExistence type="inferred from homology"/>
<accession>Q7U7S1</accession>
<organism>
    <name type="scientific">Parasynechococcus marenigrum (strain WH8102)</name>
    <dbReference type="NCBI Taxonomy" id="84588"/>
    <lineage>
        <taxon>Bacteria</taxon>
        <taxon>Bacillati</taxon>
        <taxon>Cyanobacteriota</taxon>
        <taxon>Cyanophyceae</taxon>
        <taxon>Synechococcales</taxon>
        <taxon>Prochlorococcaceae</taxon>
        <taxon>Parasynechococcus</taxon>
        <taxon>Parasynechococcus marenigrum</taxon>
    </lineage>
</organism>
<sequence length="249" mass="27081">MASLGVNIDHIANIRQARRTVEPDPVPFAMLAELGGADGITVHLREDRRHIQDRDVQLLRQTVRSRLNLEMAATQEMVEIALAVEPDMVTLVPEKREEVTTEGGLDVAAQLSGLTPMVERLQQRGIPVSLFVDAETTQLEACRNSGAHWVELHTGTYADASWADQPGQLARITEGAATARHLGLRVNAGHGLTYQNVEPIAAIPGMEELNIGHTIVARAVAVGLQQAVREMKALIQNPRLDPLFGHALG</sequence>
<feature type="chain" id="PRO_0000231850" description="Pyridoxine 5'-phosphate synthase">
    <location>
        <begin position="1"/>
        <end position="249"/>
    </location>
</feature>
<feature type="active site" description="Proton acceptor" evidence="1">
    <location>
        <position position="43"/>
    </location>
</feature>
<feature type="active site" description="Proton acceptor" evidence="1">
    <location>
        <position position="70"/>
    </location>
</feature>
<feature type="active site" description="Proton donor" evidence="1">
    <location>
        <position position="190"/>
    </location>
</feature>
<feature type="binding site" evidence="1">
    <location>
        <position position="7"/>
    </location>
    <ligand>
        <name>3-amino-2-oxopropyl phosphate</name>
        <dbReference type="ChEBI" id="CHEBI:57279"/>
    </ligand>
</feature>
<feature type="binding site" evidence="1">
    <location>
        <begin position="9"/>
        <end position="10"/>
    </location>
    <ligand>
        <name>1-deoxy-D-xylulose 5-phosphate</name>
        <dbReference type="ChEBI" id="CHEBI:57792"/>
    </ligand>
</feature>
<feature type="binding site" evidence="1">
    <location>
        <position position="18"/>
    </location>
    <ligand>
        <name>3-amino-2-oxopropyl phosphate</name>
        <dbReference type="ChEBI" id="CHEBI:57279"/>
    </ligand>
</feature>
<feature type="binding site" evidence="1">
    <location>
        <position position="45"/>
    </location>
    <ligand>
        <name>1-deoxy-D-xylulose 5-phosphate</name>
        <dbReference type="ChEBI" id="CHEBI:57792"/>
    </ligand>
</feature>
<feature type="binding site" evidence="1">
    <location>
        <position position="50"/>
    </location>
    <ligand>
        <name>1-deoxy-D-xylulose 5-phosphate</name>
        <dbReference type="ChEBI" id="CHEBI:57792"/>
    </ligand>
</feature>
<feature type="binding site" evidence="1">
    <location>
        <position position="100"/>
    </location>
    <ligand>
        <name>1-deoxy-D-xylulose 5-phosphate</name>
        <dbReference type="ChEBI" id="CHEBI:57792"/>
    </ligand>
</feature>
<feature type="binding site" evidence="1">
    <location>
        <position position="191"/>
    </location>
    <ligand>
        <name>3-amino-2-oxopropyl phosphate</name>
        <dbReference type="ChEBI" id="CHEBI:57279"/>
    </ligand>
</feature>
<feature type="binding site" evidence="1">
    <location>
        <begin position="212"/>
        <end position="213"/>
    </location>
    <ligand>
        <name>3-amino-2-oxopropyl phosphate</name>
        <dbReference type="ChEBI" id="CHEBI:57279"/>
    </ligand>
</feature>
<feature type="site" description="Transition state stabilizer" evidence="1">
    <location>
        <position position="151"/>
    </location>
</feature>
<reference key="1">
    <citation type="journal article" date="2003" name="Nature">
        <title>The genome of a motile marine Synechococcus.</title>
        <authorList>
            <person name="Palenik B."/>
            <person name="Brahamsha B."/>
            <person name="Larimer F.W."/>
            <person name="Land M.L."/>
            <person name="Hauser L."/>
            <person name="Chain P."/>
            <person name="Lamerdin J.E."/>
            <person name="Regala W."/>
            <person name="Allen E.E."/>
            <person name="McCarren J."/>
            <person name="Paulsen I.T."/>
            <person name="Dufresne A."/>
            <person name="Partensky F."/>
            <person name="Webb E.A."/>
            <person name="Waterbury J."/>
        </authorList>
    </citation>
    <scope>NUCLEOTIDE SEQUENCE [LARGE SCALE GENOMIC DNA]</scope>
    <source>
        <strain>WH8102</strain>
    </source>
</reference>